<proteinExistence type="inferred from homology"/>
<organism>
    <name type="scientific">Herminiimonas arsenicoxydans</name>
    <dbReference type="NCBI Taxonomy" id="204773"/>
    <lineage>
        <taxon>Bacteria</taxon>
        <taxon>Pseudomonadati</taxon>
        <taxon>Pseudomonadota</taxon>
        <taxon>Betaproteobacteria</taxon>
        <taxon>Burkholderiales</taxon>
        <taxon>Oxalobacteraceae</taxon>
        <taxon>Herminiimonas</taxon>
    </lineage>
</organism>
<reference key="1">
    <citation type="journal article" date="2007" name="PLoS Genet.">
        <title>A tale of two oxidation states: bacterial colonization of arsenic-rich environments.</title>
        <authorList>
            <person name="Muller D."/>
            <person name="Medigue C."/>
            <person name="Koechler S."/>
            <person name="Barbe V."/>
            <person name="Barakat M."/>
            <person name="Talla E."/>
            <person name="Bonnefoy V."/>
            <person name="Krin E."/>
            <person name="Arsene-Ploetze F."/>
            <person name="Carapito C."/>
            <person name="Chandler M."/>
            <person name="Cournoyer B."/>
            <person name="Cruveiller S."/>
            <person name="Dossat C."/>
            <person name="Duval S."/>
            <person name="Heymann M."/>
            <person name="Leize E."/>
            <person name="Lieutaud A."/>
            <person name="Lievremont D."/>
            <person name="Makita Y."/>
            <person name="Mangenot S."/>
            <person name="Nitschke W."/>
            <person name="Ortet P."/>
            <person name="Perdrial N."/>
            <person name="Schoepp B."/>
            <person name="Siguier P."/>
            <person name="Simeonova D.D."/>
            <person name="Rouy Z."/>
            <person name="Segurens B."/>
            <person name="Turlin E."/>
            <person name="Vallenet D."/>
            <person name="van Dorsselaer A."/>
            <person name="Weiss S."/>
            <person name="Weissenbach J."/>
            <person name="Lett M.-C."/>
            <person name="Danchin A."/>
            <person name="Bertin P.N."/>
        </authorList>
    </citation>
    <scope>NUCLEOTIDE SEQUENCE [LARGE SCALE GENOMIC DNA]</scope>
    <source>
        <strain>ULPAs1</strain>
    </source>
</reference>
<dbReference type="EC" id="2.7.2.8" evidence="1"/>
<dbReference type="EMBL" id="CU207211">
    <property type="protein sequence ID" value="CAL63098.1"/>
    <property type="molecule type" value="Genomic_DNA"/>
</dbReference>
<dbReference type="SMR" id="A4G9B1"/>
<dbReference type="STRING" id="204773.HEAR2988"/>
<dbReference type="KEGG" id="har:HEAR2988"/>
<dbReference type="eggNOG" id="COG0548">
    <property type="taxonomic scope" value="Bacteria"/>
</dbReference>
<dbReference type="HOGENOM" id="CLU_053680_0_0_4"/>
<dbReference type="UniPathway" id="UPA00068">
    <property type="reaction ID" value="UER00107"/>
</dbReference>
<dbReference type="Proteomes" id="UP000006697">
    <property type="component" value="Chromosome"/>
</dbReference>
<dbReference type="GO" id="GO:0005737">
    <property type="term" value="C:cytoplasm"/>
    <property type="evidence" value="ECO:0007669"/>
    <property type="project" value="UniProtKB-SubCell"/>
</dbReference>
<dbReference type="GO" id="GO:0003991">
    <property type="term" value="F:acetylglutamate kinase activity"/>
    <property type="evidence" value="ECO:0007669"/>
    <property type="project" value="UniProtKB-UniRule"/>
</dbReference>
<dbReference type="GO" id="GO:0005524">
    <property type="term" value="F:ATP binding"/>
    <property type="evidence" value="ECO:0007669"/>
    <property type="project" value="UniProtKB-UniRule"/>
</dbReference>
<dbReference type="GO" id="GO:0042450">
    <property type="term" value="P:arginine biosynthetic process via ornithine"/>
    <property type="evidence" value="ECO:0007669"/>
    <property type="project" value="UniProtKB-UniRule"/>
</dbReference>
<dbReference type="GO" id="GO:0006526">
    <property type="term" value="P:L-arginine biosynthetic process"/>
    <property type="evidence" value="ECO:0007669"/>
    <property type="project" value="UniProtKB-UniPathway"/>
</dbReference>
<dbReference type="CDD" id="cd04250">
    <property type="entry name" value="AAK_NAGK-C"/>
    <property type="match status" value="1"/>
</dbReference>
<dbReference type="FunFam" id="3.40.1160.10:FF:000004">
    <property type="entry name" value="Acetylglutamate kinase"/>
    <property type="match status" value="1"/>
</dbReference>
<dbReference type="Gene3D" id="3.40.1160.10">
    <property type="entry name" value="Acetylglutamate kinase-like"/>
    <property type="match status" value="1"/>
</dbReference>
<dbReference type="HAMAP" id="MF_00082">
    <property type="entry name" value="ArgB"/>
    <property type="match status" value="1"/>
</dbReference>
<dbReference type="InterPro" id="IPR036393">
    <property type="entry name" value="AceGlu_kinase-like_sf"/>
</dbReference>
<dbReference type="InterPro" id="IPR004662">
    <property type="entry name" value="AcgluKinase_fam"/>
</dbReference>
<dbReference type="InterPro" id="IPR037528">
    <property type="entry name" value="ArgB"/>
</dbReference>
<dbReference type="InterPro" id="IPR001048">
    <property type="entry name" value="Asp/Glu/Uridylate_kinase"/>
</dbReference>
<dbReference type="InterPro" id="IPR041727">
    <property type="entry name" value="NAGK-C"/>
</dbReference>
<dbReference type="NCBIfam" id="TIGR00761">
    <property type="entry name" value="argB"/>
    <property type="match status" value="1"/>
</dbReference>
<dbReference type="PANTHER" id="PTHR23342">
    <property type="entry name" value="N-ACETYLGLUTAMATE SYNTHASE"/>
    <property type="match status" value="1"/>
</dbReference>
<dbReference type="PANTHER" id="PTHR23342:SF0">
    <property type="entry name" value="N-ACETYLGLUTAMATE SYNTHASE, MITOCHONDRIAL"/>
    <property type="match status" value="1"/>
</dbReference>
<dbReference type="Pfam" id="PF00696">
    <property type="entry name" value="AA_kinase"/>
    <property type="match status" value="1"/>
</dbReference>
<dbReference type="PIRSF" id="PIRSF000728">
    <property type="entry name" value="NAGK"/>
    <property type="match status" value="1"/>
</dbReference>
<dbReference type="SUPFAM" id="SSF53633">
    <property type="entry name" value="Carbamate kinase-like"/>
    <property type="match status" value="1"/>
</dbReference>
<comment type="function">
    <text evidence="1">Catalyzes the ATP-dependent phosphorylation of N-acetyl-L-glutamate.</text>
</comment>
<comment type="catalytic activity">
    <reaction evidence="1">
        <text>N-acetyl-L-glutamate + ATP = N-acetyl-L-glutamyl 5-phosphate + ADP</text>
        <dbReference type="Rhea" id="RHEA:14629"/>
        <dbReference type="ChEBI" id="CHEBI:30616"/>
        <dbReference type="ChEBI" id="CHEBI:44337"/>
        <dbReference type="ChEBI" id="CHEBI:57936"/>
        <dbReference type="ChEBI" id="CHEBI:456216"/>
        <dbReference type="EC" id="2.7.2.8"/>
    </reaction>
</comment>
<comment type="pathway">
    <text evidence="1">Amino-acid biosynthesis; L-arginine biosynthesis; N(2)-acetyl-L-ornithine from L-glutamate: step 2/4.</text>
</comment>
<comment type="subcellular location">
    <subcellularLocation>
        <location evidence="1">Cytoplasm</location>
    </subcellularLocation>
</comment>
<comment type="similarity">
    <text evidence="1">Belongs to the acetylglutamate kinase family. ArgB subfamily.</text>
</comment>
<gene>
    <name evidence="1" type="primary">argB</name>
    <name type="ordered locus">HEAR2988</name>
</gene>
<feature type="chain" id="PRO_0000335636" description="Acetylglutamate kinase">
    <location>
        <begin position="1"/>
        <end position="297"/>
    </location>
</feature>
<feature type="binding site" evidence="1">
    <location>
        <begin position="70"/>
        <end position="71"/>
    </location>
    <ligand>
        <name>substrate</name>
    </ligand>
</feature>
<feature type="binding site" evidence="1">
    <location>
        <position position="92"/>
    </location>
    <ligand>
        <name>substrate</name>
    </ligand>
</feature>
<feature type="binding site" evidence="1">
    <location>
        <position position="194"/>
    </location>
    <ligand>
        <name>substrate</name>
    </ligand>
</feature>
<feature type="site" description="Transition state stabilizer" evidence="1">
    <location>
        <position position="35"/>
    </location>
</feature>
<feature type="site" description="Transition state stabilizer" evidence="1">
    <location>
        <position position="254"/>
    </location>
</feature>
<name>ARGB_HERAR</name>
<accession>A4G9B1</accession>
<evidence type="ECO:0000255" key="1">
    <source>
        <dbReference type="HAMAP-Rule" id="MF_00082"/>
    </source>
</evidence>
<protein>
    <recommendedName>
        <fullName evidence="1">Acetylglutamate kinase</fullName>
        <ecNumber evidence="1">2.7.2.8</ecNumber>
    </recommendedName>
    <alternativeName>
        <fullName evidence="1">N-acetyl-L-glutamate 5-phosphotransferase</fullName>
    </alternativeName>
    <alternativeName>
        <fullName evidence="1">NAG kinase</fullName>
        <shortName evidence="1">NAGK</shortName>
    </alternativeName>
</protein>
<sequence>MNADLTVVSPQIQAQILAEALPYIRKFHGKTIVVKYGGNAMTEERLKHSFARDVILLKLVGMNPVVVHGGGPQIDNALKKIGKQGTFIQGMRITDEETMEVVEWVLGGEVQQDIVMLINHYGGQAVGLTGKDGGLIRARKMNMPDRENPGKFLDIGFVGDIEAINPAVVKALQDDAFIPIISPIGFGDDGQAYNINADVVAGKIAEILRAEKLIMMTNIAGVQDKQGNLLTDLSAREIDEMFEDGTISGGMLPKISSALDAAKSGVNTVHIIDGRIEHSLLLEVLTEQAFGTMIRSH</sequence>
<keyword id="KW-0028">Amino-acid biosynthesis</keyword>
<keyword id="KW-0055">Arginine biosynthesis</keyword>
<keyword id="KW-0067">ATP-binding</keyword>
<keyword id="KW-0963">Cytoplasm</keyword>
<keyword id="KW-0418">Kinase</keyword>
<keyword id="KW-0547">Nucleotide-binding</keyword>
<keyword id="KW-1185">Reference proteome</keyword>
<keyword id="KW-0808">Transferase</keyword>